<reference key="1">
    <citation type="journal article" date="1993" name="Proc. Natl. Acad. Sci. U.S.A.">
        <title>The Drosophila Stubble-stubbloid gene encodes an apparent transmembrane serine protease required for epithelial morphogenesis.</title>
        <authorList>
            <person name="Appel L.F."/>
            <person name="Prout M."/>
            <person name="Abu-Shumays R."/>
            <person name="Hammonds A."/>
            <person name="Garbe J.C."/>
            <person name="Fristrom D."/>
            <person name="Fristrom J."/>
        </authorList>
    </citation>
    <scope>NUCLEOTIDE SEQUENCE [MRNA]</scope>
    <scope>FUNCTION</scope>
    <scope>INDUCTION</scope>
    <source>
        <strain>Oregon-R</strain>
    </source>
</reference>
<reference key="2">
    <citation type="journal article" date="2000" name="Science">
        <title>The genome sequence of Drosophila melanogaster.</title>
        <authorList>
            <person name="Adams M.D."/>
            <person name="Celniker S.E."/>
            <person name="Holt R.A."/>
            <person name="Evans C.A."/>
            <person name="Gocayne J.D."/>
            <person name="Amanatides P.G."/>
            <person name="Scherer S.E."/>
            <person name="Li P.W."/>
            <person name="Hoskins R.A."/>
            <person name="Galle R.F."/>
            <person name="George R.A."/>
            <person name="Lewis S.E."/>
            <person name="Richards S."/>
            <person name="Ashburner M."/>
            <person name="Henderson S.N."/>
            <person name="Sutton G.G."/>
            <person name="Wortman J.R."/>
            <person name="Yandell M.D."/>
            <person name="Zhang Q."/>
            <person name="Chen L.X."/>
            <person name="Brandon R.C."/>
            <person name="Rogers Y.-H.C."/>
            <person name="Blazej R.G."/>
            <person name="Champe M."/>
            <person name="Pfeiffer B.D."/>
            <person name="Wan K.H."/>
            <person name="Doyle C."/>
            <person name="Baxter E.G."/>
            <person name="Helt G."/>
            <person name="Nelson C.R."/>
            <person name="Miklos G.L.G."/>
            <person name="Abril J.F."/>
            <person name="Agbayani A."/>
            <person name="An H.-J."/>
            <person name="Andrews-Pfannkoch C."/>
            <person name="Baldwin D."/>
            <person name="Ballew R.M."/>
            <person name="Basu A."/>
            <person name="Baxendale J."/>
            <person name="Bayraktaroglu L."/>
            <person name="Beasley E.M."/>
            <person name="Beeson K.Y."/>
            <person name="Benos P.V."/>
            <person name="Berman B.P."/>
            <person name="Bhandari D."/>
            <person name="Bolshakov S."/>
            <person name="Borkova D."/>
            <person name="Botchan M.R."/>
            <person name="Bouck J."/>
            <person name="Brokstein P."/>
            <person name="Brottier P."/>
            <person name="Burtis K.C."/>
            <person name="Busam D.A."/>
            <person name="Butler H."/>
            <person name="Cadieu E."/>
            <person name="Center A."/>
            <person name="Chandra I."/>
            <person name="Cherry J.M."/>
            <person name="Cawley S."/>
            <person name="Dahlke C."/>
            <person name="Davenport L.B."/>
            <person name="Davies P."/>
            <person name="de Pablos B."/>
            <person name="Delcher A."/>
            <person name="Deng Z."/>
            <person name="Mays A.D."/>
            <person name="Dew I."/>
            <person name="Dietz S.M."/>
            <person name="Dodson K."/>
            <person name="Doup L.E."/>
            <person name="Downes M."/>
            <person name="Dugan-Rocha S."/>
            <person name="Dunkov B.C."/>
            <person name="Dunn P."/>
            <person name="Durbin K.J."/>
            <person name="Evangelista C.C."/>
            <person name="Ferraz C."/>
            <person name="Ferriera S."/>
            <person name="Fleischmann W."/>
            <person name="Fosler C."/>
            <person name="Gabrielian A.E."/>
            <person name="Garg N.S."/>
            <person name="Gelbart W.M."/>
            <person name="Glasser K."/>
            <person name="Glodek A."/>
            <person name="Gong F."/>
            <person name="Gorrell J.H."/>
            <person name="Gu Z."/>
            <person name="Guan P."/>
            <person name="Harris M."/>
            <person name="Harris N.L."/>
            <person name="Harvey D.A."/>
            <person name="Heiman T.J."/>
            <person name="Hernandez J.R."/>
            <person name="Houck J."/>
            <person name="Hostin D."/>
            <person name="Houston K.A."/>
            <person name="Howland T.J."/>
            <person name="Wei M.-H."/>
            <person name="Ibegwam C."/>
            <person name="Jalali M."/>
            <person name="Kalush F."/>
            <person name="Karpen G.H."/>
            <person name="Ke Z."/>
            <person name="Kennison J.A."/>
            <person name="Ketchum K.A."/>
            <person name="Kimmel B.E."/>
            <person name="Kodira C.D."/>
            <person name="Kraft C.L."/>
            <person name="Kravitz S."/>
            <person name="Kulp D."/>
            <person name="Lai Z."/>
            <person name="Lasko P."/>
            <person name="Lei Y."/>
            <person name="Levitsky A.A."/>
            <person name="Li J.H."/>
            <person name="Li Z."/>
            <person name="Liang Y."/>
            <person name="Lin X."/>
            <person name="Liu X."/>
            <person name="Mattei B."/>
            <person name="McIntosh T.C."/>
            <person name="McLeod M.P."/>
            <person name="McPherson D."/>
            <person name="Merkulov G."/>
            <person name="Milshina N.V."/>
            <person name="Mobarry C."/>
            <person name="Morris J."/>
            <person name="Moshrefi A."/>
            <person name="Mount S.M."/>
            <person name="Moy M."/>
            <person name="Murphy B."/>
            <person name="Murphy L."/>
            <person name="Muzny D.M."/>
            <person name="Nelson D.L."/>
            <person name="Nelson D.R."/>
            <person name="Nelson K.A."/>
            <person name="Nixon K."/>
            <person name="Nusskern D.R."/>
            <person name="Pacleb J.M."/>
            <person name="Palazzolo M."/>
            <person name="Pittman G.S."/>
            <person name="Pan S."/>
            <person name="Pollard J."/>
            <person name="Puri V."/>
            <person name="Reese M.G."/>
            <person name="Reinert K."/>
            <person name="Remington K."/>
            <person name="Saunders R.D.C."/>
            <person name="Scheeler F."/>
            <person name="Shen H."/>
            <person name="Shue B.C."/>
            <person name="Siden-Kiamos I."/>
            <person name="Simpson M."/>
            <person name="Skupski M.P."/>
            <person name="Smith T.J."/>
            <person name="Spier E."/>
            <person name="Spradling A.C."/>
            <person name="Stapleton M."/>
            <person name="Strong R."/>
            <person name="Sun E."/>
            <person name="Svirskas R."/>
            <person name="Tector C."/>
            <person name="Turner R."/>
            <person name="Venter E."/>
            <person name="Wang A.H."/>
            <person name="Wang X."/>
            <person name="Wang Z.-Y."/>
            <person name="Wassarman D.A."/>
            <person name="Weinstock G.M."/>
            <person name="Weissenbach J."/>
            <person name="Williams S.M."/>
            <person name="Woodage T."/>
            <person name="Worley K.C."/>
            <person name="Wu D."/>
            <person name="Yang S."/>
            <person name="Yao Q.A."/>
            <person name="Ye J."/>
            <person name="Yeh R.-F."/>
            <person name="Zaveri J.S."/>
            <person name="Zhan M."/>
            <person name="Zhang G."/>
            <person name="Zhao Q."/>
            <person name="Zheng L."/>
            <person name="Zheng X.H."/>
            <person name="Zhong F.N."/>
            <person name="Zhong W."/>
            <person name="Zhou X."/>
            <person name="Zhu S.C."/>
            <person name="Zhu X."/>
            <person name="Smith H.O."/>
            <person name="Gibbs R.A."/>
            <person name="Myers E.W."/>
            <person name="Rubin G.M."/>
            <person name="Venter J.C."/>
        </authorList>
    </citation>
    <scope>NUCLEOTIDE SEQUENCE [LARGE SCALE GENOMIC DNA]</scope>
    <source>
        <strain>Berkeley</strain>
    </source>
</reference>
<reference key="3">
    <citation type="journal article" date="2002" name="Genome Biol.">
        <title>Annotation of the Drosophila melanogaster euchromatic genome: a systematic review.</title>
        <authorList>
            <person name="Misra S."/>
            <person name="Crosby M.A."/>
            <person name="Mungall C.J."/>
            <person name="Matthews B.B."/>
            <person name="Campbell K.S."/>
            <person name="Hradecky P."/>
            <person name="Huang Y."/>
            <person name="Kaminker J.S."/>
            <person name="Millburn G.H."/>
            <person name="Prochnik S.E."/>
            <person name="Smith C.D."/>
            <person name="Tupy J.L."/>
            <person name="Whitfield E.J."/>
            <person name="Bayraktaroglu L."/>
            <person name="Berman B.P."/>
            <person name="Bettencourt B.R."/>
            <person name="Celniker S.E."/>
            <person name="de Grey A.D.N.J."/>
            <person name="Drysdale R.A."/>
            <person name="Harris N.L."/>
            <person name="Richter J."/>
            <person name="Russo S."/>
            <person name="Schroeder A.J."/>
            <person name="Shu S.Q."/>
            <person name="Stapleton M."/>
            <person name="Yamada C."/>
            <person name="Ashburner M."/>
            <person name="Gelbart W.M."/>
            <person name="Rubin G.M."/>
            <person name="Lewis S.E."/>
        </authorList>
    </citation>
    <scope>GENOME REANNOTATION</scope>
    <source>
        <strain>Berkeley</strain>
    </source>
</reference>
<reference key="4">
    <citation type="journal article" date="2002" name="Genome Biol.">
        <title>A Drosophila full-length cDNA resource.</title>
        <authorList>
            <person name="Stapleton M."/>
            <person name="Carlson J.W."/>
            <person name="Brokstein P."/>
            <person name="Yu C."/>
            <person name="Champe M."/>
            <person name="George R.A."/>
            <person name="Guarin H."/>
            <person name="Kronmiller B."/>
            <person name="Pacleb J.M."/>
            <person name="Park S."/>
            <person name="Wan K.H."/>
            <person name="Rubin G.M."/>
            <person name="Celniker S.E."/>
        </authorList>
    </citation>
    <scope>NUCLEOTIDE SEQUENCE [LARGE SCALE MRNA] OF 105-787</scope>
    <source>
        <strain>Berkeley</strain>
        <tissue>Embryo</tissue>
    </source>
</reference>
<evidence type="ECO:0000250" key="1"/>
<evidence type="ECO:0000255" key="2"/>
<evidence type="ECO:0000255" key="3">
    <source>
        <dbReference type="PROSITE-ProRule" id="PRU00274"/>
    </source>
</evidence>
<evidence type="ECO:0000256" key="4">
    <source>
        <dbReference type="SAM" id="MobiDB-lite"/>
    </source>
</evidence>
<evidence type="ECO:0000269" key="5">
    <source>
    </source>
</evidence>
<evidence type="ECO:0000305" key="6"/>
<protein>
    <recommendedName>
        <fullName>Serine proteinase stubble</fullName>
        <ecNumber>3.4.21.-</ecNumber>
    </recommendedName>
    <alternativeName>
        <fullName>Protein stubble-stubbloid</fullName>
    </alternativeName>
    <component>
        <recommendedName>
            <fullName>Serine proteinase stubble non-catalytic chain</fullName>
        </recommendedName>
    </component>
    <component>
        <recommendedName>
            <fullName>Serine proteinase stubble catalytic chain</fullName>
        </recommendedName>
    </component>
</protein>
<keyword id="KW-1015">Disulfide bond</keyword>
<keyword id="KW-0325">Glycoprotein</keyword>
<keyword id="KW-0378">Hydrolase</keyword>
<keyword id="KW-0472">Membrane</keyword>
<keyword id="KW-0645">Protease</keyword>
<keyword id="KW-1185">Reference proteome</keyword>
<keyword id="KW-0720">Serine protease</keyword>
<keyword id="KW-0735">Signal-anchor</keyword>
<keyword id="KW-0812">Transmembrane</keyword>
<keyword id="KW-1133">Transmembrane helix</keyword>
<keyword id="KW-0865">Zymogen</keyword>
<accession>Q05319</accession>
<accession>Q8MRH5</accession>
<accession>Q9VEY6</accession>
<comment type="function">
    <text evidence="5">Hormone dependent protease required for epithelial morphogenesis, including the formation of bristles, legs, and wings. Has a dual function, detaches imaginal disk cells from extracellular matrices through its extracellular proteolytic domain and transmits an outside-to-inside signal to its intracellular domain to modify the cytoskeleton during morphogenesis.</text>
</comment>
<comment type="subcellular location">
    <subcellularLocation>
        <location>Membrane</location>
        <topology>Single-pass type II membrane protein</topology>
    </subcellularLocation>
</comment>
<comment type="induction">
    <text evidence="5">By 20-hydroxyecdysone (20HE).</text>
</comment>
<comment type="PTM">
    <text>May activate itself by proteolytic cleavage.</text>
</comment>
<comment type="similarity">
    <text evidence="3">Belongs to the peptidase S1 family.</text>
</comment>
<comment type="caution">
    <text evidence="6">It is uncertain whether Met-1 or Met-24 is the initiator.</text>
</comment>
<feature type="chain" id="PRO_0000028141" description="Serine proteinase stubble non-catalytic chain" evidence="2">
    <location>
        <begin position="1"/>
        <end position="543"/>
    </location>
</feature>
<feature type="chain" id="PRO_0000028142" description="Serine proteinase stubble catalytic chain" evidence="2">
    <location>
        <begin position="544"/>
        <end position="787"/>
    </location>
</feature>
<feature type="topological domain" description="Cytoplasmic" evidence="2">
    <location>
        <begin position="1"/>
        <end position="58"/>
    </location>
</feature>
<feature type="transmembrane region" description="Helical; Signal-anchor for type II membrane protein">
    <location>
        <begin position="59"/>
        <end position="80"/>
    </location>
</feature>
<feature type="topological domain" description="Extracellular" evidence="2">
    <location>
        <begin position="81"/>
        <end position="787"/>
    </location>
</feature>
<feature type="domain" description="Peptidase S1" evidence="3">
    <location>
        <begin position="544"/>
        <end position="787"/>
    </location>
</feature>
<feature type="region of interest" description="Disordered" evidence="4">
    <location>
        <begin position="1"/>
        <end position="22"/>
    </location>
</feature>
<feature type="region of interest" description="Disordered" evidence="4">
    <location>
        <begin position="225"/>
        <end position="516"/>
    </location>
</feature>
<feature type="compositionally biased region" description="Low complexity" evidence="4">
    <location>
        <begin position="262"/>
        <end position="280"/>
    </location>
</feature>
<feature type="compositionally biased region" description="Low complexity" evidence="4">
    <location>
        <begin position="287"/>
        <end position="303"/>
    </location>
</feature>
<feature type="compositionally biased region" description="Low complexity" evidence="4">
    <location>
        <begin position="358"/>
        <end position="368"/>
    </location>
</feature>
<feature type="compositionally biased region" description="Low complexity" evidence="4">
    <location>
        <begin position="393"/>
        <end position="438"/>
    </location>
</feature>
<feature type="compositionally biased region" description="Low complexity" evidence="4">
    <location>
        <begin position="449"/>
        <end position="485"/>
    </location>
</feature>
<feature type="compositionally biased region" description="Polar residues" evidence="4">
    <location>
        <begin position="502"/>
        <end position="512"/>
    </location>
</feature>
<feature type="active site" description="Charge relay system" evidence="1">
    <location>
        <position position="590"/>
    </location>
</feature>
<feature type="active site" description="Charge relay system" evidence="1">
    <location>
        <position position="640"/>
    </location>
</feature>
<feature type="active site" description="Charge relay system" evidence="1">
    <location>
        <position position="738"/>
    </location>
</feature>
<feature type="glycosylation site" description="N-linked (GlcNAc...) asparagine" evidence="2">
    <location>
        <position position="177"/>
    </location>
</feature>
<feature type="glycosylation site" description="N-linked (GlcNAc...) asparagine" evidence="2">
    <location>
        <position position="672"/>
    </location>
</feature>
<feature type="disulfide bond" description="Interchain (between non-catalytic and catalytic chains)" evidence="3">
    <location>
        <begin position="532"/>
        <end position="660"/>
    </location>
</feature>
<feature type="disulfide bond" evidence="3">
    <location>
        <begin position="575"/>
        <end position="591"/>
    </location>
</feature>
<feature type="disulfide bond" evidence="3">
    <location>
        <begin position="704"/>
        <end position="723"/>
    </location>
</feature>
<feature type="disulfide bond" evidence="3">
    <location>
        <begin position="734"/>
        <end position="763"/>
    </location>
</feature>
<feature type="sequence conflict" description="In Ref. 1; AAA28918." evidence="6" ref="1">
    <location>
        <position position="287"/>
    </location>
</feature>
<feature type="sequence conflict" description="In Ref. 1; AAA28918." evidence="6" ref="1">
    <original>T</original>
    <variation>S</variation>
    <location>
        <position position="349"/>
    </location>
</feature>
<feature type="sequence conflict" description="In Ref. 1; AAA28918." evidence="6" ref="1">
    <original>P</original>
    <variation>S</variation>
    <location>
        <position position="354"/>
    </location>
</feature>
<feature type="sequence conflict" description="In Ref. 1; AAA28918." evidence="6" ref="1">
    <original>H</original>
    <variation>R</variation>
    <location>
        <position position="521"/>
    </location>
</feature>
<sequence length="787" mass="85144">MKQPTLIRPRLRHRRSTPAAATKMCPKRHWLVNNRAAGSRGSGGAAARSRRSLDQIVEVLVALIVVNCLATAAAALITPPDSLESLGSLGIPSSSASSSEDDDDMSSGFYRIPHRLEGYPQLQQLQRGQNFKISPKPCSFGRVEGTCMFVWECIKSEGKHVGMCVDSFMFGSCCTHNYTDNIVLPQTAFSYTRPTKPLTLRPRPPAAPYKPMISGMTTIERPHGAGTLVIRPSGPHHQGTLARPHPPPYQSKPTTASDLHGSASHPSSSSSSSSSSNPNSIWHTSTQQQQQQQHQQNQQNHWQMTTEPSFITKPRPTGWTKPGIVNLPMPARPSKPSKPTKKPIVYDRTPPPPPSVPPSTSTSTTSTSLIWPAQTHPPQPHRPTRPQLSPGTSLAASSSSHWPSSTTSTTSSTTSTTTTTTTTRRTTTPTTTTRRTTTNKPTRPYQRPTTATSSSSTSTTSSKTPTTTRPISSSSSSSSGIVTSSQRPTQPTHRTPVLATSGIETNEISDSSIPDAGALGHVKTISAARSECGVPTLARPETRIVGGKSAAFGRWPWQVSVRRTSFFGFSSTHRCGGALINENWIATAGHCVDDLLISQIRIRVGEYDFSHVQEQLPYIERGVAKKVVHPKYSFLTYEYDLALVKLEQPLEFAPHVSPICLPETDSLLIGMNATVTGWGRLSEGGTLPSVLQEVSVPIVSNDNCKSMFMRAGRQEFIPDIFLCAGYETGGQDSCQGDSGGPLQAKSQDGRFFLAGIISWGIGCAEANLPGVCTRISKFTPWILEHVR</sequence>
<name>STUB_DROME</name>
<dbReference type="EC" id="3.4.21.-"/>
<dbReference type="EMBL" id="L11451">
    <property type="protein sequence ID" value="AAA28918.1"/>
    <property type="molecule type" value="mRNA"/>
</dbReference>
<dbReference type="EMBL" id="AE014297">
    <property type="protein sequence ID" value="AAF55277.1"/>
    <property type="molecule type" value="Genomic_DNA"/>
</dbReference>
<dbReference type="EMBL" id="AY119618">
    <property type="protein sequence ID" value="AAM50272.1"/>
    <property type="molecule type" value="mRNA"/>
</dbReference>
<dbReference type="PIR" id="A47547">
    <property type="entry name" value="A47547"/>
</dbReference>
<dbReference type="RefSeq" id="NP_001287355.1">
    <property type="nucleotide sequence ID" value="NM_001300426.1"/>
</dbReference>
<dbReference type="RefSeq" id="NP_476709.1">
    <property type="nucleotide sequence ID" value="NM_057361.4"/>
</dbReference>
<dbReference type="SMR" id="Q05319"/>
<dbReference type="BioGRID" id="67009">
    <property type="interactions" value="6"/>
</dbReference>
<dbReference type="FunCoup" id="Q05319">
    <property type="interactions" value="28"/>
</dbReference>
<dbReference type="STRING" id="7227.FBpp0310459"/>
<dbReference type="MEROPS" id="S01.225"/>
<dbReference type="GlyCosmos" id="Q05319">
    <property type="glycosylation" value="2 sites, No reported glycans"/>
</dbReference>
<dbReference type="GlyGen" id="Q05319">
    <property type="glycosylation" value="2 sites"/>
</dbReference>
<dbReference type="PaxDb" id="7227-FBpp0082704"/>
<dbReference type="EnsemblMetazoa" id="FBtr0083250">
    <property type="protein sequence ID" value="FBpp0082704"/>
    <property type="gene ID" value="FBgn0003319"/>
</dbReference>
<dbReference type="EnsemblMetazoa" id="FBtr0344008">
    <property type="protein sequence ID" value="FBpp0310459"/>
    <property type="gene ID" value="FBgn0003319"/>
</dbReference>
<dbReference type="GeneID" id="41958"/>
<dbReference type="KEGG" id="dme:Dmel_CG4316"/>
<dbReference type="UCSC" id="CG4316-RA">
    <property type="organism name" value="d. melanogaster"/>
</dbReference>
<dbReference type="AGR" id="FB:FBgn0003319"/>
<dbReference type="CTD" id="20233"/>
<dbReference type="FlyBase" id="FBgn0003319">
    <property type="gene designation" value="Sb"/>
</dbReference>
<dbReference type="VEuPathDB" id="VectorBase:FBgn0003319"/>
<dbReference type="eggNOG" id="KOG3627">
    <property type="taxonomic scope" value="Eukaryota"/>
</dbReference>
<dbReference type="GeneTree" id="ENSGT00940000176272"/>
<dbReference type="HOGENOM" id="CLU_006842_17_0_1"/>
<dbReference type="InParanoid" id="Q05319"/>
<dbReference type="OMA" id="VWEKNTH"/>
<dbReference type="OrthoDB" id="414661at2759"/>
<dbReference type="PhylomeDB" id="Q05319"/>
<dbReference type="Reactome" id="R-DME-977606">
    <property type="pathway name" value="Regulation of Complement cascade"/>
</dbReference>
<dbReference type="BioGRID-ORCS" id="41958">
    <property type="hits" value="0 hits in 1 CRISPR screen"/>
</dbReference>
<dbReference type="GenomeRNAi" id="41958"/>
<dbReference type="PRO" id="PR:Q05319"/>
<dbReference type="Proteomes" id="UP000000803">
    <property type="component" value="Chromosome 3R"/>
</dbReference>
<dbReference type="Bgee" id="FBgn0003319">
    <property type="expression patterns" value="Expressed in dorsal appendage forming follicle cell in ovary and 20 other cell types or tissues"/>
</dbReference>
<dbReference type="ExpressionAtlas" id="Q05319">
    <property type="expression patterns" value="baseline and differential"/>
</dbReference>
<dbReference type="GO" id="GO:0005886">
    <property type="term" value="C:plasma membrane"/>
    <property type="evidence" value="ECO:0000250"/>
    <property type="project" value="FlyBase"/>
</dbReference>
<dbReference type="GO" id="GO:0004252">
    <property type="term" value="F:serine-type endopeptidase activity"/>
    <property type="evidence" value="ECO:0000255"/>
    <property type="project" value="FlyBase"/>
</dbReference>
<dbReference type="GO" id="GO:0051017">
    <property type="term" value="P:actin filament bundle assembly"/>
    <property type="evidence" value="ECO:0000315"/>
    <property type="project" value="FlyBase"/>
</dbReference>
<dbReference type="GO" id="GO:0007010">
    <property type="term" value="P:cytoskeleton organization"/>
    <property type="evidence" value="ECO:0000315"/>
    <property type="project" value="FlyBase"/>
</dbReference>
<dbReference type="GO" id="GO:0006508">
    <property type="term" value="P:proteolysis"/>
    <property type="evidence" value="ECO:0000255"/>
    <property type="project" value="FlyBase"/>
</dbReference>
<dbReference type="GO" id="GO:0035220">
    <property type="term" value="P:wing disc development"/>
    <property type="evidence" value="ECO:0000315"/>
    <property type="project" value="FlyBase"/>
</dbReference>
<dbReference type="CDD" id="cd00190">
    <property type="entry name" value="Tryp_SPc"/>
    <property type="match status" value="1"/>
</dbReference>
<dbReference type="FunFam" id="2.40.10.10:FF:000006">
    <property type="entry name" value="Serine proteinase stubble"/>
    <property type="match status" value="1"/>
</dbReference>
<dbReference type="Gene3D" id="2.40.10.10">
    <property type="entry name" value="Trypsin-like serine proteases"/>
    <property type="match status" value="1"/>
</dbReference>
<dbReference type="InterPro" id="IPR009003">
    <property type="entry name" value="Peptidase_S1_PA"/>
</dbReference>
<dbReference type="InterPro" id="IPR043504">
    <property type="entry name" value="Peptidase_S1_PA_chymotrypsin"/>
</dbReference>
<dbReference type="InterPro" id="IPR001314">
    <property type="entry name" value="Peptidase_S1A"/>
</dbReference>
<dbReference type="InterPro" id="IPR001254">
    <property type="entry name" value="Trypsin_dom"/>
</dbReference>
<dbReference type="InterPro" id="IPR033116">
    <property type="entry name" value="TRYPSIN_SER"/>
</dbReference>
<dbReference type="PANTHER" id="PTHR24252">
    <property type="entry name" value="ACROSIN-RELATED"/>
    <property type="match status" value="1"/>
</dbReference>
<dbReference type="PANTHER" id="PTHR24252:SF7">
    <property type="entry name" value="HYALIN"/>
    <property type="match status" value="1"/>
</dbReference>
<dbReference type="Pfam" id="PF00089">
    <property type="entry name" value="Trypsin"/>
    <property type="match status" value="1"/>
</dbReference>
<dbReference type="PRINTS" id="PR00722">
    <property type="entry name" value="CHYMOTRYPSIN"/>
</dbReference>
<dbReference type="SMART" id="SM00020">
    <property type="entry name" value="Tryp_SPc"/>
    <property type="match status" value="1"/>
</dbReference>
<dbReference type="SUPFAM" id="SSF50494">
    <property type="entry name" value="Trypsin-like serine proteases"/>
    <property type="match status" value="1"/>
</dbReference>
<dbReference type="PROSITE" id="PS50240">
    <property type="entry name" value="TRYPSIN_DOM"/>
    <property type="match status" value="1"/>
</dbReference>
<dbReference type="PROSITE" id="PS00135">
    <property type="entry name" value="TRYPSIN_SER"/>
    <property type="match status" value="1"/>
</dbReference>
<organism>
    <name type="scientific">Drosophila melanogaster</name>
    <name type="common">Fruit fly</name>
    <dbReference type="NCBI Taxonomy" id="7227"/>
    <lineage>
        <taxon>Eukaryota</taxon>
        <taxon>Metazoa</taxon>
        <taxon>Ecdysozoa</taxon>
        <taxon>Arthropoda</taxon>
        <taxon>Hexapoda</taxon>
        <taxon>Insecta</taxon>
        <taxon>Pterygota</taxon>
        <taxon>Neoptera</taxon>
        <taxon>Endopterygota</taxon>
        <taxon>Diptera</taxon>
        <taxon>Brachycera</taxon>
        <taxon>Muscomorpha</taxon>
        <taxon>Ephydroidea</taxon>
        <taxon>Drosophilidae</taxon>
        <taxon>Drosophila</taxon>
        <taxon>Sophophora</taxon>
    </lineage>
</organism>
<gene>
    <name type="primary">Sb</name>
    <name type="synonym">Sb-sbd</name>
    <name type="ORF">CG4316</name>
</gene>
<proteinExistence type="evidence at transcript level"/>